<gene>
    <name evidence="1" type="primary">hscB</name>
    <name type="ordered locus">SNSL254_A2739</name>
</gene>
<dbReference type="EMBL" id="CP001113">
    <property type="protein sequence ID" value="ACF61911.1"/>
    <property type="molecule type" value="Genomic_DNA"/>
</dbReference>
<dbReference type="RefSeq" id="WP_000384398.1">
    <property type="nucleotide sequence ID" value="NZ_CCMR01000001.1"/>
</dbReference>
<dbReference type="SMR" id="B4T0R9"/>
<dbReference type="KEGG" id="see:SNSL254_A2739"/>
<dbReference type="HOGENOM" id="CLU_068529_2_0_6"/>
<dbReference type="Proteomes" id="UP000008824">
    <property type="component" value="Chromosome"/>
</dbReference>
<dbReference type="GO" id="GO:1990230">
    <property type="term" value="C:iron-sulfur cluster transfer complex"/>
    <property type="evidence" value="ECO:0007669"/>
    <property type="project" value="TreeGrafter"/>
</dbReference>
<dbReference type="GO" id="GO:0001671">
    <property type="term" value="F:ATPase activator activity"/>
    <property type="evidence" value="ECO:0007669"/>
    <property type="project" value="InterPro"/>
</dbReference>
<dbReference type="GO" id="GO:0051087">
    <property type="term" value="F:protein-folding chaperone binding"/>
    <property type="evidence" value="ECO:0007669"/>
    <property type="project" value="InterPro"/>
</dbReference>
<dbReference type="GO" id="GO:0044571">
    <property type="term" value="P:[2Fe-2S] cluster assembly"/>
    <property type="evidence" value="ECO:0007669"/>
    <property type="project" value="InterPro"/>
</dbReference>
<dbReference type="GO" id="GO:0051259">
    <property type="term" value="P:protein complex oligomerization"/>
    <property type="evidence" value="ECO:0007669"/>
    <property type="project" value="InterPro"/>
</dbReference>
<dbReference type="GO" id="GO:0006457">
    <property type="term" value="P:protein folding"/>
    <property type="evidence" value="ECO:0007669"/>
    <property type="project" value="UniProtKB-UniRule"/>
</dbReference>
<dbReference type="CDD" id="cd06257">
    <property type="entry name" value="DnaJ"/>
    <property type="match status" value="1"/>
</dbReference>
<dbReference type="FunFam" id="1.10.287.110:FF:000008">
    <property type="entry name" value="Co-chaperone protein HscB"/>
    <property type="match status" value="1"/>
</dbReference>
<dbReference type="FunFam" id="1.20.1280.20:FF:000001">
    <property type="entry name" value="Co-chaperone protein HscB"/>
    <property type="match status" value="1"/>
</dbReference>
<dbReference type="Gene3D" id="1.10.287.110">
    <property type="entry name" value="DnaJ domain"/>
    <property type="match status" value="1"/>
</dbReference>
<dbReference type="Gene3D" id="1.20.1280.20">
    <property type="entry name" value="HscB, C-terminal domain"/>
    <property type="match status" value="1"/>
</dbReference>
<dbReference type="HAMAP" id="MF_00682">
    <property type="entry name" value="HscB"/>
    <property type="match status" value="1"/>
</dbReference>
<dbReference type="InterPro" id="IPR001623">
    <property type="entry name" value="DnaJ_domain"/>
</dbReference>
<dbReference type="InterPro" id="IPR004640">
    <property type="entry name" value="HscB"/>
</dbReference>
<dbReference type="InterPro" id="IPR036386">
    <property type="entry name" value="HscB_C_sf"/>
</dbReference>
<dbReference type="InterPro" id="IPR009073">
    <property type="entry name" value="HscB_oligo_C"/>
</dbReference>
<dbReference type="InterPro" id="IPR036869">
    <property type="entry name" value="J_dom_sf"/>
</dbReference>
<dbReference type="NCBIfam" id="TIGR00714">
    <property type="entry name" value="hscB"/>
    <property type="match status" value="1"/>
</dbReference>
<dbReference type="NCBIfam" id="NF003449">
    <property type="entry name" value="PRK05014.1"/>
    <property type="match status" value="1"/>
</dbReference>
<dbReference type="PANTHER" id="PTHR14021">
    <property type="entry name" value="IRON-SULFUR CLUSTER CO-CHAPERONE PROTEIN HSCB"/>
    <property type="match status" value="1"/>
</dbReference>
<dbReference type="PANTHER" id="PTHR14021:SF15">
    <property type="entry name" value="IRON-SULFUR CLUSTER CO-CHAPERONE PROTEIN HSCB"/>
    <property type="match status" value="1"/>
</dbReference>
<dbReference type="Pfam" id="PF07743">
    <property type="entry name" value="HSCB_C"/>
    <property type="match status" value="1"/>
</dbReference>
<dbReference type="SMART" id="SM00271">
    <property type="entry name" value="DnaJ"/>
    <property type="match status" value="1"/>
</dbReference>
<dbReference type="SUPFAM" id="SSF46565">
    <property type="entry name" value="Chaperone J-domain"/>
    <property type="match status" value="1"/>
</dbReference>
<dbReference type="SUPFAM" id="SSF47144">
    <property type="entry name" value="HSC20 (HSCB), C-terminal oligomerisation domain"/>
    <property type="match status" value="1"/>
</dbReference>
<dbReference type="PROSITE" id="PS50076">
    <property type="entry name" value="DNAJ_2"/>
    <property type="match status" value="1"/>
</dbReference>
<comment type="function">
    <text evidence="1">Co-chaperone involved in the maturation of iron-sulfur cluster-containing proteins. Seems to help targeting proteins to be folded toward HscA.</text>
</comment>
<comment type="subunit">
    <text evidence="1">Interacts with HscA and stimulates its ATPase activity. Interacts with IscU.</text>
</comment>
<comment type="similarity">
    <text evidence="1">Belongs to the HscB family.</text>
</comment>
<protein>
    <recommendedName>
        <fullName evidence="1">Co-chaperone protein HscB</fullName>
    </recommendedName>
    <alternativeName>
        <fullName evidence="1">Hsc20</fullName>
    </alternativeName>
</protein>
<keyword id="KW-0143">Chaperone</keyword>
<organism>
    <name type="scientific">Salmonella newport (strain SL254)</name>
    <dbReference type="NCBI Taxonomy" id="423368"/>
    <lineage>
        <taxon>Bacteria</taxon>
        <taxon>Pseudomonadati</taxon>
        <taxon>Pseudomonadota</taxon>
        <taxon>Gammaproteobacteria</taxon>
        <taxon>Enterobacterales</taxon>
        <taxon>Enterobacteriaceae</taxon>
        <taxon>Salmonella</taxon>
    </lineage>
</organism>
<feature type="chain" id="PRO_1000131753" description="Co-chaperone protein HscB">
    <location>
        <begin position="1"/>
        <end position="171"/>
    </location>
</feature>
<feature type="domain" description="J" evidence="1">
    <location>
        <begin position="2"/>
        <end position="74"/>
    </location>
</feature>
<proteinExistence type="inferred from homology"/>
<sequence>MDYFTLFGLPARYQIDTQALSLRFQDLQRQYHPDKFANGTQAQQLAAVQQSATINQAWQTLRHPLTRAEYLLSLHGFDLASEQHTVRDTAFLMEQLTLREELDDIEQSKDDVRLESFIKRVQKMFDARLQQMVEQLDNAAWDAAADTVRKLRFLDKLRSSAEQLEEKLLDF</sequence>
<name>HSCB_SALNS</name>
<evidence type="ECO:0000255" key="1">
    <source>
        <dbReference type="HAMAP-Rule" id="MF_00682"/>
    </source>
</evidence>
<reference key="1">
    <citation type="journal article" date="2011" name="J. Bacteriol.">
        <title>Comparative genomics of 28 Salmonella enterica isolates: evidence for CRISPR-mediated adaptive sublineage evolution.</title>
        <authorList>
            <person name="Fricke W.F."/>
            <person name="Mammel M.K."/>
            <person name="McDermott P.F."/>
            <person name="Tartera C."/>
            <person name="White D.G."/>
            <person name="Leclerc J.E."/>
            <person name="Ravel J."/>
            <person name="Cebula T.A."/>
        </authorList>
    </citation>
    <scope>NUCLEOTIDE SEQUENCE [LARGE SCALE GENOMIC DNA]</scope>
    <source>
        <strain>SL254</strain>
    </source>
</reference>
<accession>B4T0R9</accession>